<accession>Q7VA27</accession>
<feature type="chain" id="PRO_0000168010" description="Small ribosomal subunit protein bS20">
    <location>
        <begin position="1"/>
        <end position="99"/>
    </location>
</feature>
<reference key="1">
    <citation type="journal article" date="2003" name="Proc. Natl. Acad. Sci. U.S.A.">
        <title>Genome sequence of the cyanobacterium Prochlorococcus marinus SS120, a nearly minimal oxyphototrophic genome.</title>
        <authorList>
            <person name="Dufresne A."/>
            <person name="Salanoubat M."/>
            <person name="Partensky F."/>
            <person name="Artiguenave F."/>
            <person name="Axmann I.M."/>
            <person name="Barbe V."/>
            <person name="Duprat S."/>
            <person name="Galperin M.Y."/>
            <person name="Koonin E.V."/>
            <person name="Le Gall F."/>
            <person name="Makarova K.S."/>
            <person name="Ostrowski M."/>
            <person name="Oztas S."/>
            <person name="Robert C."/>
            <person name="Rogozin I.B."/>
            <person name="Scanlan D.J."/>
            <person name="Tandeau de Marsac N."/>
            <person name="Weissenbach J."/>
            <person name="Wincker P."/>
            <person name="Wolf Y.I."/>
            <person name="Hess W.R."/>
        </authorList>
    </citation>
    <scope>NUCLEOTIDE SEQUENCE [LARGE SCALE GENOMIC DNA]</scope>
    <source>
        <strain>SARG / CCMP1375 / SS120</strain>
    </source>
</reference>
<keyword id="KW-1185">Reference proteome</keyword>
<keyword id="KW-0687">Ribonucleoprotein</keyword>
<keyword id="KW-0689">Ribosomal protein</keyword>
<keyword id="KW-0694">RNA-binding</keyword>
<keyword id="KW-0699">rRNA-binding</keyword>
<sequence length="99" mass="11189">MANNNSAKKRIQIAERNRIQNRTYKSAMRTLMKRCFEACGAYSEKPSEDAKKDIQNSMNDAFSKIDKAVKTGVLHRNTGANQKSRLTSVVKKTIEPVVK</sequence>
<organism>
    <name type="scientific">Prochlorococcus marinus (strain SARG / CCMP1375 / SS120)</name>
    <dbReference type="NCBI Taxonomy" id="167539"/>
    <lineage>
        <taxon>Bacteria</taxon>
        <taxon>Bacillati</taxon>
        <taxon>Cyanobacteriota</taxon>
        <taxon>Cyanophyceae</taxon>
        <taxon>Synechococcales</taxon>
        <taxon>Prochlorococcaceae</taxon>
        <taxon>Prochlorococcus</taxon>
    </lineage>
</organism>
<evidence type="ECO:0000255" key="1">
    <source>
        <dbReference type="HAMAP-Rule" id="MF_00500"/>
    </source>
</evidence>
<evidence type="ECO:0000305" key="2"/>
<dbReference type="EMBL" id="AE017126">
    <property type="protein sequence ID" value="AAQ00686.1"/>
    <property type="molecule type" value="Genomic_DNA"/>
</dbReference>
<dbReference type="RefSeq" id="NP_876033.1">
    <property type="nucleotide sequence ID" value="NC_005042.1"/>
</dbReference>
<dbReference type="RefSeq" id="WP_011125792.1">
    <property type="nucleotide sequence ID" value="NC_005042.1"/>
</dbReference>
<dbReference type="SMR" id="Q7VA27"/>
<dbReference type="STRING" id="167539.Pro_1642"/>
<dbReference type="EnsemblBacteria" id="AAQ00686">
    <property type="protein sequence ID" value="AAQ00686"/>
    <property type="gene ID" value="Pro_1642"/>
</dbReference>
<dbReference type="KEGG" id="pma:Pro_1642"/>
<dbReference type="PATRIC" id="fig|167539.5.peg.1736"/>
<dbReference type="eggNOG" id="COG0268">
    <property type="taxonomic scope" value="Bacteria"/>
</dbReference>
<dbReference type="HOGENOM" id="CLU_160655_5_0_3"/>
<dbReference type="OrthoDB" id="9808392at2"/>
<dbReference type="Proteomes" id="UP000001420">
    <property type="component" value="Chromosome"/>
</dbReference>
<dbReference type="GO" id="GO:0005829">
    <property type="term" value="C:cytosol"/>
    <property type="evidence" value="ECO:0007669"/>
    <property type="project" value="TreeGrafter"/>
</dbReference>
<dbReference type="GO" id="GO:0015935">
    <property type="term" value="C:small ribosomal subunit"/>
    <property type="evidence" value="ECO:0007669"/>
    <property type="project" value="TreeGrafter"/>
</dbReference>
<dbReference type="GO" id="GO:0070181">
    <property type="term" value="F:small ribosomal subunit rRNA binding"/>
    <property type="evidence" value="ECO:0007669"/>
    <property type="project" value="TreeGrafter"/>
</dbReference>
<dbReference type="GO" id="GO:0003735">
    <property type="term" value="F:structural constituent of ribosome"/>
    <property type="evidence" value="ECO:0007669"/>
    <property type="project" value="InterPro"/>
</dbReference>
<dbReference type="GO" id="GO:0006412">
    <property type="term" value="P:translation"/>
    <property type="evidence" value="ECO:0007669"/>
    <property type="project" value="UniProtKB-UniRule"/>
</dbReference>
<dbReference type="FunFam" id="1.20.58.110:FF:000001">
    <property type="entry name" value="30S ribosomal protein S20"/>
    <property type="match status" value="1"/>
</dbReference>
<dbReference type="Gene3D" id="1.20.58.110">
    <property type="entry name" value="Ribosomal protein S20"/>
    <property type="match status" value="1"/>
</dbReference>
<dbReference type="HAMAP" id="MF_00500">
    <property type="entry name" value="Ribosomal_bS20"/>
    <property type="match status" value="1"/>
</dbReference>
<dbReference type="InterPro" id="IPR002583">
    <property type="entry name" value="Ribosomal_bS20"/>
</dbReference>
<dbReference type="InterPro" id="IPR036510">
    <property type="entry name" value="Ribosomal_bS20_sf"/>
</dbReference>
<dbReference type="NCBIfam" id="TIGR00029">
    <property type="entry name" value="S20"/>
    <property type="match status" value="1"/>
</dbReference>
<dbReference type="PANTHER" id="PTHR33398">
    <property type="entry name" value="30S RIBOSOMAL PROTEIN S20"/>
    <property type="match status" value="1"/>
</dbReference>
<dbReference type="PANTHER" id="PTHR33398:SF1">
    <property type="entry name" value="SMALL RIBOSOMAL SUBUNIT PROTEIN BS20C"/>
    <property type="match status" value="1"/>
</dbReference>
<dbReference type="Pfam" id="PF01649">
    <property type="entry name" value="Ribosomal_S20p"/>
    <property type="match status" value="1"/>
</dbReference>
<dbReference type="SUPFAM" id="SSF46992">
    <property type="entry name" value="Ribosomal protein S20"/>
    <property type="match status" value="1"/>
</dbReference>
<protein>
    <recommendedName>
        <fullName evidence="1">Small ribosomal subunit protein bS20</fullName>
    </recommendedName>
    <alternativeName>
        <fullName evidence="2">30S ribosomal protein S20</fullName>
    </alternativeName>
</protein>
<comment type="function">
    <text evidence="1">Binds directly to 16S ribosomal RNA.</text>
</comment>
<comment type="similarity">
    <text evidence="1">Belongs to the bacterial ribosomal protein bS20 family.</text>
</comment>
<proteinExistence type="inferred from homology"/>
<name>RS20_PROMA</name>
<gene>
    <name evidence="1" type="primary">rpsT</name>
    <name evidence="1" type="synonym">rps20</name>
    <name type="ordered locus">Pro_1642</name>
</gene>